<name>RPOA_LISIN</name>
<dbReference type="EC" id="2.7.7.6" evidence="1"/>
<dbReference type="EMBL" id="AL596173">
    <property type="protein sequence ID" value="CAC97981.1"/>
    <property type="molecule type" value="Genomic_DNA"/>
</dbReference>
<dbReference type="PIR" id="AE1776">
    <property type="entry name" value="AE1776"/>
</dbReference>
<dbReference type="RefSeq" id="WP_003723676.1">
    <property type="nucleotide sequence ID" value="NC_003212.1"/>
</dbReference>
<dbReference type="SMR" id="P66700"/>
<dbReference type="STRING" id="272626.gene:17567142"/>
<dbReference type="KEGG" id="lin:rpoA"/>
<dbReference type="eggNOG" id="COG0202">
    <property type="taxonomic scope" value="Bacteria"/>
</dbReference>
<dbReference type="HOGENOM" id="CLU_053084_0_1_9"/>
<dbReference type="OrthoDB" id="9805706at2"/>
<dbReference type="Proteomes" id="UP000002513">
    <property type="component" value="Chromosome"/>
</dbReference>
<dbReference type="GO" id="GO:0005737">
    <property type="term" value="C:cytoplasm"/>
    <property type="evidence" value="ECO:0007669"/>
    <property type="project" value="UniProtKB-ARBA"/>
</dbReference>
<dbReference type="GO" id="GO:0000428">
    <property type="term" value="C:DNA-directed RNA polymerase complex"/>
    <property type="evidence" value="ECO:0007669"/>
    <property type="project" value="UniProtKB-KW"/>
</dbReference>
<dbReference type="GO" id="GO:0003677">
    <property type="term" value="F:DNA binding"/>
    <property type="evidence" value="ECO:0007669"/>
    <property type="project" value="UniProtKB-UniRule"/>
</dbReference>
<dbReference type="GO" id="GO:0003899">
    <property type="term" value="F:DNA-directed RNA polymerase activity"/>
    <property type="evidence" value="ECO:0007669"/>
    <property type="project" value="UniProtKB-UniRule"/>
</dbReference>
<dbReference type="GO" id="GO:0046983">
    <property type="term" value="F:protein dimerization activity"/>
    <property type="evidence" value="ECO:0007669"/>
    <property type="project" value="InterPro"/>
</dbReference>
<dbReference type="GO" id="GO:0006351">
    <property type="term" value="P:DNA-templated transcription"/>
    <property type="evidence" value="ECO:0007669"/>
    <property type="project" value="UniProtKB-UniRule"/>
</dbReference>
<dbReference type="CDD" id="cd06928">
    <property type="entry name" value="RNAP_alpha_NTD"/>
    <property type="match status" value="1"/>
</dbReference>
<dbReference type="FunFam" id="1.10.150.20:FF:000001">
    <property type="entry name" value="DNA-directed RNA polymerase subunit alpha"/>
    <property type="match status" value="1"/>
</dbReference>
<dbReference type="FunFam" id="2.170.120.12:FF:000001">
    <property type="entry name" value="DNA-directed RNA polymerase subunit alpha"/>
    <property type="match status" value="1"/>
</dbReference>
<dbReference type="Gene3D" id="1.10.150.20">
    <property type="entry name" value="5' to 3' exonuclease, C-terminal subdomain"/>
    <property type="match status" value="1"/>
</dbReference>
<dbReference type="Gene3D" id="2.170.120.12">
    <property type="entry name" value="DNA-directed RNA polymerase, insert domain"/>
    <property type="match status" value="1"/>
</dbReference>
<dbReference type="Gene3D" id="3.30.1360.10">
    <property type="entry name" value="RNA polymerase, RBP11-like subunit"/>
    <property type="match status" value="1"/>
</dbReference>
<dbReference type="HAMAP" id="MF_00059">
    <property type="entry name" value="RNApol_bact_RpoA"/>
    <property type="match status" value="1"/>
</dbReference>
<dbReference type="InterPro" id="IPR011262">
    <property type="entry name" value="DNA-dir_RNA_pol_insert"/>
</dbReference>
<dbReference type="InterPro" id="IPR011263">
    <property type="entry name" value="DNA-dir_RNA_pol_RpoA/D/Rpb3"/>
</dbReference>
<dbReference type="InterPro" id="IPR011773">
    <property type="entry name" value="DNA-dir_RpoA"/>
</dbReference>
<dbReference type="InterPro" id="IPR036603">
    <property type="entry name" value="RBP11-like"/>
</dbReference>
<dbReference type="InterPro" id="IPR011260">
    <property type="entry name" value="RNAP_asu_C"/>
</dbReference>
<dbReference type="InterPro" id="IPR036643">
    <property type="entry name" value="RNApol_insert_sf"/>
</dbReference>
<dbReference type="NCBIfam" id="NF003513">
    <property type="entry name" value="PRK05182.1-2"/>
    <property type="match status" value="1"/>
</dbReference>
<dbReference type="NCBIfam" id="NF003515">
    <property type="entry name" value="PRK05182.2-1"/>
    <property type="match status" value="1"/>
</dbReference>
<dbReference type="NCBIfam" id="NF003519">
    <property type="entry name" value="PRK05182.2-5"/>
    <property type="match status" value="1"/>
</dbReference>
<dbReference type="NCBIfam" id="TIGR02027">
    <property type="entry name" value="rpoA"/>
    <property type="match status" value="1"/>
</dbReference>
<dbReference type="Pfam" id="PF01000">
    <property type="entry name" value="RNA_pol_A_bac"/>
    <property type="match status" value="1"/>
</dbReference>
<dbReference type="Pfam" id="PF03118">
    <property type="entry name" value="RNA_pol_A_CTD"/>
    <property type="match status" value="1"/>
</dbReference>
<dbReference type="Pfam" id="PF01193">
    <property type="entry name" value="RNA_pol_L"/>
    <property type="match status" value="1"/>
</dbReference>
<dbReference type="SMART" id="SM00662">
    <property type="entry name" value="RPOLD"/>
    <property type="match status" value="1"/>
</dbReference>
<dbReference type="SUPFAM" id="SSF47789">
    <property type="entry name" value="C-terminal domain of RNA polymerase alpha subunit"/>
    <property type="match status" value="1"/>
</dbReference>
<dbReference type="SUPFAM" id="SSF56553">
    <property type="entry name" value="Insert subdomain of RNA polymerase alpha subunit"/>
    <property type="match status" value="1"/>
</dbReference>
<dbReference type="SUPFAM" id="SSF55257">
    <property type="entry name" value="RBP11-like subunits of RNA polymerase"/>
    <property type="match status" value="1"/>
</dbReference>
<organism>
    <name type="scientific">Listeria innocua serovar 6a (strain ATCC BAA-680 / CLIP 11262)</name>
    <dbReference type="NCBI Taxonomy" id="272626"/>
    <lineage>
        <taxon>Bacteria</taxon>
        <taxon>Bacillati</taxon>
        <taxon>Bacillota</taxon>
        <taxon>Bacilli</taxon>
        <taxon>Bacillales</taxon>
        <taxon>Listeriaceae</taxon>
        <taxon>Listeria</taxon>
    </lineage>
</organism>
<evidence type="ECO:0000255" key="1">
    <source>
        <dbReference type="HAMAP-Rule" id="MF_00059"/>
    </source>
</evidence>
<feature type="chain" id="PRO_0000175328" description="DNA-directed RNA polymerase subunit alpha">
    <location>
        <begin position="1"/>
        <end position="314"/>
    </location>
</feature>
<feature type="region of interest" description="Alpha N-terminal domain (alpha-NTD)" evidence="1">
    <location>
        <begin position="1"/>
        <end position="228"/>
    </location>
</feature>
<feature type="region of interest" description="Alpha C-terminal domain (alpha-CTD)" evidence="1">
    <location>
        <begin position="245"/>
        <end position="314"/>
    </location>
</feature>
<reference key="1">
    <citation type="journal article" date="2001" name="Science">
        <title>Comparative genomics of Listeria species.</title>
        <authorList>
            <person name="Glaser P."/>
            <person name="Frangeul L."/>
            <person name="Buchrieser C."/>
            <person name="Rusniok C."/>
            <person name="Amend A."/>
            <person name="Baquero F."/>
            <person name="Berche P."/>
            <person name="Bloecker H."/>
            <person name="Brandt P."/>
            <person name="Chakraborty T."/>
            <person name="Charbit A."/>
            <person name="Chetouani F."/>
            <person name="Couve E."/>
            <person name="de Daruvar A."/>
            <person name="Dehoux P."/>
            <person name="Domann E."/>
            <person name="Dominguez-Bernal G."/>
            <person name="Duchaud E."/>
            <person name="Durant L."/>
            <person name="Dussurget O."/>
            <person name="Entian K.-D."/>
            <person name="Fsihi H."/>
            <person name="Garcia-del Portillo F."/>
            <person name="Garrido P."/>
            <person name="Gautier L."/>
            <person name="Goebel W."/>
            <person name="Gomez-Lopez N."/>
            <person name="Hain T."/>
            <person name="Hauf J."/>
            <person name="Jackson D."/>
            <person name="Jones L.-M."/>
            <person name="Kaerst U."/>
            <person name="Kreft J."/>
            <person name="Kuhn M."/>
            <person name="Kunst F."/>
            <person name="Kurapkat G."/>
            <person name="Madueno E."/>
            <person name="Maitournam A."/>
            <person name="Mata Vicente J."/>
            <person name="Ng E."/>
            <person name="Nedjari H."/>
            <person name="Nordsiek G."/>
            <person name="Novella S."/>
            <person name="de Pablos B."/>
            <person name="Perez-Diaz J.-C."/>
            <person name="Purcell R."/>
            <person name="Remmel B."/>
            <person name="Rose M."/>
            <person name="Schlueter T."/>
            <person name="Simoes N."/>
            <person name="Tierrez A."/>
            <person name="Vazquez-Boland J.-A."/>
            <person name="Voss H."/>
            <person name="Wehland J."/>
            <person name="Cossart P."/>
        </authorList>
    </citation>
    <scope>NUCLEOTIDE SEQUENCE [LARGE SCALE GENOMIC DNA]</scope>
    <source>
        <strain>ATCC BAA-680 / CLIP 11262</strain>
    </source>
</reference>
<gene>
    <name evidence="1" type="primary">rpoA</name>
    <name type="ordered locus">lin2755</name>
</gene>
<accession>P66700</accession>
<accession>Q927N3</accession>
<keyword id="KW-0240">DNA-directed RNA polymerase</keyword>
<keyword id="KW-0548">Nucleotidyltransferase</keyword>
<keyword id="KW-0804">Transcription</keyword>
<keyword id="KW-0808">Transferase</keyword>
<protein>
    <recommendedName>
        <fullName evidence="1">DNA-directed RNA polymerase subunit alpha</fullName>
        <shortName evidence="1">RNAP subunit alpha</shortName>
        <ecNumber evidence="1">2.7.7.6</ecNumber>
    </recommendedName>
    <alternativeName>
        <fullName evidence="1">RNA polymerase subunit alpha</fullName>
    </alternativeName>
    <alternativeName>
        <fullName evidence="1">Transcriptase subunit alpha</fullName>
    </alternativeName>
</protein>
<proteinExistence type="inferred from homology"/>
<comment type="function">
    <text evidence="1">DNA-dependent RNA polymerase catalyzes the transcription of DNA into RNA using the four ribonucleoside triphosphates as substrates.</text>
</comment>
<comment type="catalytic activity">
    <reaction evidence="1">
        <text>RNA(n) + a ribonucleoside 5'-triphosphate = RNA(n+1) + diphosphate</text>
        <dbReference type="Rhea" id="RHEA:21248"/>
        <dbReference type="Rhea" id="RHEA-COMP:14527"/>
        <dbReference type="Rhea" id="RHEA-COMP:17342"/>
        <dbReference type="ChEBI" id="CHEBI:33019"/>
        <dbReference type="ChEBI" id="CHEBI:61557"/>
        <dbReference type="ChEBI" id="CHEBI:140395"/>
        <dbReference type="EC" id="2.7.7.6"/>
    </reaction>
</comment>
<comment type="subunit">
    <text evidence="1">Homodimer. The RNAP catalytic core consists of 2 alpha, 1 beta, 1 beta' and 1 omega subunit. When a sigma factor is associated with the core the holoenzyme is formed, which can initiate transcription.</text>
</comment>
<comment type="domain">
    <text evidence="1">The N-terminal domain is essential for RNAP assembly and basal transcription, whereas the C-terminal domain is involved in interaction with transcriptional regulators and with upstream promoter elements.</text>
</comment>
<comment type="similarity">
    <text evidence="1">Belongs to the RNA polymerase alpha chain family.</text>
</comment>
<sequence length="314" mass="34906">MIEIEKPKIETIEISDDAKYGKFVVEPLERGYGTTLGNSLRRILLSSLPGAAVTSIQIDGALHEFSVIEGVVEDVTTMILNIKKLALKIYSDEEKTLEIDMQGPGVVTAADINYDSDVEILNPDLHIATLSDNAKFHVRLNATRGRGYTPADQNKRENMPIGVLPVDSIFSPVIRVNYQVENTRVGQSTNYDKLTFDVLTDGSISPEEAVSLGAKILSEHLSIFVNLTDEAQKAEIMIEKEESHKEKVLEMTIEELDLSVRSYNCLKRAGINTVQELADKSEDDMMKVRNLGRKSLEEVKVKLADLGLSLRNEN</sequence>